<feature type="chain" id="PRO_0000122217" description="Small nuclear ribonucleoprotein Sm D3">
    <location>
        <begin position="1"/>
        <end position="136"/>
    </location>
</feature>
<feature type="domain" description="Sm" evidence="2">
    <location>
        <begin position="6"/>
        <end position="78"/>
    </location>
</feature>
<feature type="region of interest" description="Disordered" evidence="3">
    <location>
        <begin position="98"/>
        <end position="136"/>
    </location>
</feature>
<feature type="sequence conflict" description="In Ref. 2; AAA65451." evidence="4" ref="2">
    <original>EG</original>
    <variation>RS</variation>
    <location>
        <begin position="15"/>
        <end position="16"/>
    </location>
</feature>
<name>SMD3_CAEEL</name>
<protein>
    <recommendedName>
        <fullName>Small nuclear ribonucleoprotein Sm D3</fullName>
        <shortName>Sm-D3</shortName>
    </recommendedName>
    <alternativeName>
        <fullName>snRNP core protein D3</fullName>
    </alternativeName>
</protein>
<accession>Q17348</accession>
<accession>Q9U2U5</accession>
<reference key="1">
    <citation type="journal article" date="1998" name="Science">
        <title>Genome sequence of the nematode C. elegans: a platform for investigating biology.</title>
        <authorList>
            <consortium name="The C. elegans sequencing consortium"/>
        </authorList>
    </citation>
    <scope>NUCLEOTIDE SEQUENCE [LARGE SCALE GENOMIC DNA]</scope>
    <source>
        <strain>Bristol N2</strain>
    </source>
</reference>
<reference key="2">
    <citation type="submission" date="1995-03" db="EMBL/GenBank/DDBJ databases">
        <authorList>
            <person name="Winge P."/>
        </authorList>
    </citation>
    <scope>NUCLEOTIDE SEQUENCE [MRNA] OF 15-85</scope>
</reference>
<dbReference type="EMBL" id="AL117204">
    <property type="protein sequence ID" value="CAB55132.1"/>
    <property type="molecule type" value="Genomic_DNA"/>
</dbReference>
<dbReference type="EMBL" id="U23937">
    <property type="protein sequence ID" value="AAA65451.1"/>
    <property type="molecule type" value="mRNA"/>
</dbReference>
<dbReference type="PIR" id="T31498">
    <property type="entry name" value="T31498"/>
</dbReference>
<dbReference type="RefSeq" id="NP_503027.1">
    <property type="nucleotide sequence ID" value="NM_070626.7"/>
</dbReference>
<dbReference type="PDB" id="8RO0">
    <property type="method" value="EM"/>
    <property type="resolution" value="2.90 A"/>
    <property type="chains" value="a/h=1-136"/>
</dbReference>
<dbReference type="PDB" id="8RO1">
    <property type="method" value="EM"/>
    <property type="resolution" value="3.00 A"/>
    <property type="chains" value="a/h=1-136"/>
</dbReference>
<dbReference type="PDBsum" id="8RO0"/>
<dbReference type="PDBsum" id="8RO1"/>
<dbReference type="EMDB" id="EMD-19397"/>
<dbReference type="EMDB" id="EMD-19398"/>
<dbReference type="SMR" id="Q17348"/>
<dbReference type="BioGRID" id="43560">
    <property type="interactions" value="58"/>
</dbReference>
<dbReference type="FunCoup" id="Q17348">
    <property type="interactions" value="2638"/>
</dbReference>
<dbReference type="IntAct" id="Q17348">
    <property type="interactions" value="1"/>
</dbReference>
<dbReference type="STRING" id="6239.Y116A8C.42.1"/>
<dbReference type="PaxDb" id="6239-Y116A8C.42"/>
<dbReference type="PeptideAtlas" id="Q17348"/>
<dbReference type="EnsemblMetazoa" id="Y116A8C.42.1">
    <property type="protein sequence ID" value="Y116A8C.42.1"/>
    <property type="gene ID" value="WBGene00004914"/>
</dbReference>
<dbReference type="GeneID" id="178483"/>
<dbReference type="KEGG" id="cel:CELE_Y116A8C.42"/>
<dbReference type="UCSC" id="Y116A8C.42.1">
    <property type="organism name" value="c. elegans"/>
</dbReference>
<dbReference type="AGR" id="WB:WBGene00004914"/>
<dbReference type="CTD" id="178483"/>
<dbReference type="WormBase" id="Y116A8C.42">
    <property type="protein sequence ID" value="CE23346"/>
    <property type="gene ID" value="WBGene00004914"/>
    <property type="gene designation" value="snr-1"/>
</dbReference>
<dbReference type="eggNOG" id="KOG3172">
    <property type="taxonomic scope" value="Eukaryota"/>
</dbReference>
<dbReference type="GeneTree" id="ENSGT00610000086153"/>
<dbReference type="HOGENOM" id="CLU_099537_1_0_1"/>
<dbReference type="InParanoid" id="Q17348"/>
<dbReference type="OMA" id="HTITCET"/>
<dbReference type="OrthoDB" id="6425924at2759"/>
<dbReference type="PhylomeDB" id="Q17348"/>
<dbReference type="Reactome" id="R-CEL-111367">
    <property type="pathway name" value="SLBP independent Processing of Histone Pre-mRNAs"/>
</dbReference>
<dbReference type="Reactome" id="R-CEL-191859">
    <property type="pathway name" value="snRNP Assembly"/>
</dbReference>
<dbReference type="Reactome" id="R-CEL-72163">
    <property type="pathway name" value="mRNA Splicing - Major Pathway"/>
</dbReference>
<dbReference type="Reactome" id="R-CEL-72165">
    <property type="pathway name" value="mRNA Splicing - Minor Pathway"/>
</dbReference>
<dbReference type="Reactome" id="R-CEL-73856">
    <property type="pathway name" value="RNA Polymerase II Transcription Termination"/>
</dbReference>
<dbReference type="Reactome" id="R-CEL-77588">
    <property type="pathway name" value="SLBP Dependent Processing of Replication-Dependent Histone Pre-mRNAs"/>
</dbReference>
<dbReference type="PRO" id="PR:Q17348"/>
<dbReference type="Proteomes" id="UP000001940">
    <property type="component" value="Chromosome IV"/>
</dbReference>
<dbReference type="Bgee" id="WBGene00004914">
    <property type="expression patterns" value="Expressed in germ line (C elegans) and 4 other cell types or tissues"/>
</dbReference>
<dbReference type="GO" id="GO:0071013">
    <property type="term" value="C:catalytic step 2 spliceosome"/>
    <property type="evidence" value="ECO:0000318"/>
    <property type="project" value="GO_Central"/>
</dbReference>
<dbReference type="GO" id="GO:0000243">
    <property type="term" value="C:commitment complex"/>
    <property type="evidence" value="ECO:0000318"/>
    <property type="project" value="GO_Central"/>
</dbReference>
<dbReference type="GO" id="GO:0005829">
    <property type="term" value="C:cytosol"/>
    <property type="evidence" value="ECO:0007669"/>
    <property type="project" value="UniProtKB-SubCell"/>
</dbReference>
<dbReference type="GO" id="GO:0043186">
    <property type="term" value="C:P granule"/>
    <property type="evidence" value="ECO:0000314"/>
    <property type="project" value="WormBase"/>
</dbReference>
<dbReference type="GO" id="GO:0071011">
    <property type="term" value="C:precatalytic spliceosome"/>
    <property type="evidence" value="ECO:0000318"/>
    <property type="project" value="GO_Central"/>
</dbReference>
<dbReference type="GO" id="GO:0034719">
    <property type="term" value="C:SMN-Sm protein complex"/>
    <property type="evidence" value="ECO:0000318"/>
    <property type="project" value="GO_Central"/>
</dbReference>
<dbReference type="GO" id="GO:0097526">
    <property type="term" value="C:spliceosomal tri-snRNP complex"/>
    <property type="evidence" value="ECO:0000318"/>
    <property type="project" value="GO_Central"/>
</dbReference>
<dbReference type="GO" id="GO:0005685">
    <property type="term" value="C:U1 snRNP"/>
    <property type="evidence" value="ECO:0000318"/>
    <property type="project" value="GO_Central"/>
</dbReference>
<dbReference type="GO" id="GO:0005686">
    <property type="term" value="C:U2 snRNP"/>
    <property type="evidence" value="ECO:0000318"/>
    <property type="project" value="GO_Central"/>
</dbReference>
<dbReference type="GO" id="GO:0005687">
    <property type="term" value="C:U4 snRNP"/>
    <property type="evidence" value="ECO:0000318"/>
    <property type="project" value="GO_Central"/>
</dbReference>
<dbReference type="GO" id="GO:0005682">
    <property type="term" value="C:U5 snRNP"/>
    <property type="evidence" value="ECO:0000318"/>
    <property type="project" value="GO_Central"/>
</dbReference>
<dbReference type="GO" id="GO:0003723">
    <property type="term" value="F:RNA binding"/>
    <property type="evidence" value="ECO:0000318"/>
    <property type="project" value="GO_Central"/>
</dbReference>
<dbReference type="GO" id="GO:0000387">
    <property type="term" value="P:spliceosomal snRNP assembly"/>
    <property type="evidence" value="ECO:0000318"/>
    <property type="project" value="GO_Central"/>
</dbReference>
<dbReference type="CDD" id="cd01721">
    <property type="entry name" value="Sm_D3"/>
    <property type="match status" value="1"/>
</dbReference>
<dbReference type="FunFam" id="2.30.30.100:FF:000002">
    <property type="entry name" value="Small nuclear ribonucleoprotein Sm D3"/>
    <property type="match status" value="1"/>
</dbReference>
<dbReference type="Gene3D" id="2.30.30.100">
    <property type="match status" value="1"/>
</dbReference>
<dbReference type="InterPro" id="IPR027141">
    <property type="entry name" value="LSm4/Sm_D1/D3"/>
</dbReference>
<dbReference type="InterPro" id="IPR010920">
    <property type="entry name" value="LSM_dom_sf"/>
</dbReference>
<dbReference type="InterPro" id="IPR047575">
    <property type="entry name" value="Sm"/>
</dbReference>
<dbReference type="InterPro" id="IPR001163">
    <property type="entry name" value="Sm_dom_euk/arc"/>
</dbReference>
<dbReference type="InterPro" id="IPR034099">
    <property type="entry name" value="SmD3"/>
</dbReference>
<dbReference type="PANTHER" id="PTHR23338">
    <property type="entry name" value="SMALL NUCLEAR RIBONUCLEOPROTEIN SM"/>
    <property type="match status" value="1"/>
</dbReference>
<dbReference type="Pfam" id="PF01423">
    <property type="entry name" value="LSM"/>
    <property type="match status" value="1"/>
</dbReference>
<dbReference type="SMART" id="SM00651">
    <property type="entry name" value="Sm"/>
    <property type="match status" value="1"/>
</dbReference>
<dbReference type="SUPFAM" id="SSF50182">
    <property type="entry name" value="Sm-like ribonucleoproteins"/>
    <property type="match status" value="1"/>
</dbReference>
<dbReference type="PROSITE" id="PS52002">
    <property type="entry name" value="SM"/>
    <property type="match status" value="1"/>
</dbReference>
<organism>
    <name type="scientific">Caenorhabditis elegans</name>
    <dbReference type="NCBI Taxonomy" id="6239"/>
    <lineage>
        <taxon>Eukaryota</taxon>
        <taxon>Metazoa</taxon>
        <taxon>Ecdysozoa</taxon>
        <taxon>Nematoda</taxon>
        <taxon>Chromadorea</taxon>
        <taxon>Rhabditida</taxon>
        <taxon>Rhabditina</taxon>
        <taxon>Rhabditomorpha</taxon>
        <taxon>Rhabditoidea</taxon>
        <taxon>Rhabditidae</taxon>
        <taxon>Peloderinae</taxon>
        <taxon>Caenorhabditis</taxon>
    </lineage>
</organism>
<gene>
    <name type="primary">snr-1</name>
    <name type="ORF">Y116A8C.42</name>
</gene>
<keyword id="KW-0002">3D-structure</keyword>
<keyword id="KW-0963">Cytoplasm</keyword>
<keyword id="KW-0507">mRNA processing</keyword>
<keyword id="KW-0508">mRNA splicing</keyword>
<keyword id="KW-0539">Nucleus</keyword>
<keyword id="KW-1185">Reference proteome</keyword>
<keyword id="KW-0687">Ribonucleoprotein</keyword>
<keyword id="KW-0747">Spliceosome</keyword>
<proteinExistence type="evidence at protein level"/>
<evidence type="ECO:0000250" key="1">
    <source>
        <dbReference type="UniProtKB" id="P62318"/>
    </source>
</evidence>
<evidence type="ECO:0000255" key="2">
    <source>
        <dbReference type="PROSITE-ProRule" id="PRU01346"/>
    </source>
</evidence>
<evidence type="ECO:0000256" key="3">
    <source>
        <dbReference type="SAM" id="MobiDB-lite"/>
    </source>
</evidence>
<evidence type="ECO:0000305" key="4"/>
<sequence>MTSVGVPIKILHEAEGHMVTLETVTGEVYRGKLSEAEDNMNCQLAETVVTFRDGRSHQLDNVFIRGNKIRFMILPDMLKNAPMFKNIGRAQKGAIGMGLGGLDQRGRGRGTAFRRPMGRGGPRGMSRPGGAPTFRG</sequence>
<comment type="function">
    <text evidence="1">Plays a role in pre-mRNA splicing as a core component of the spliceosomal U1, U2, U4 and U5 small nuclear ribonucleoproteins (snRNPs), the building blocks of the spliceosome (By similarity).</text>
</comment>
<comment type="subcellular location">
    <subcellularLocation>
        <location evidence="1">Nucleus</location>
    </subcellularLocation>
    <subcellularLocation>
        <location evidence="1">Cytoplasm</location>
        <location evidence="1">Cytosol</location>
    </subcellularLocation>
</comment>
<comment type="similarity">
    <text evidence="4">Belongs to the snRNP core protein family.</text>
</comment>